<gene>
    <name evidence="11" type="primary">dmxL1</name>
</gene>
<proteinExistence type="inferred from homology"/>
<protein>
    <recommendedName>
        <fullName evidence="3">Acetyl-CoA carboxylase dmxL1</fullName>
        <shortName evidence="3">ACC dmxL1</shortName>
        <ecNumber evidence="3">6.4.1.2</ecNumber>
    </recommendedName>
    <alternativeName>
        <fullName evidence="11">Dimeric xanthone biosynthesis cluster protein L1</fullName>
    </alternativeName>
    <domain>
        <recommendedName>
            <fullName evidence="3">Biotin carboxylase</fullName>
            <ecNumber evidence="3">6.3.4.14</ecNumber>
        </recommendedName>
    </domain>
</protein>
<dbReference type="EC" id="6.4.1.2" evidence="3"/>
<dbReference type="EC" id="6.3.4.14" evidence="3"/>
<dbReference type="EMBL" id="MK182094">
    <property type="protein sequence ID" value="QCL09090.1"/>
    <property type="molecule type" value="Genomic_DNA"/>
</dbReference>
<dbReference type="SMR" id="A0A4P8DJE6"/>
<dbReference type="UniPathway" id="UPA00655">
    <property type="reaction ID" value="UER00711"/>
</dbReference>
<dbReference type="GO" id="GO:0005739">
    <property type="term" value="C:mitochondrion"/>
    <property type="evidence" value="ECO:0007669"/>
    <property type="project" value="TreeGrafter"/>
</dbReference>
<dbReference type="GO" id="GO:0003989">
    <property type="term" value="F:acetyl-CoA carboxylase activity"/>
    <property type="evidence" value="ECO:0007669"/>
    <property type="project" value="UniProtKB-EC"/>
</dbReference>
<dbReference type="GO" id="GO:0005524">
    <property type="term" value="F:ATP binding"/>
    <property type="evidence" value="ECO:0007669"/>
    <property type="project" value="UniProtKB-KW"/>
</dbReference>
<dbReference type="GO" id="GO:0004075">
    <property type="term" value="F:biotin carboxylase activity"/>
    <property type="evidence" value="ECO:0007669"/>
    <property type="project" value="UniProtKB-EC"/>
</dbReference>
<dbReference type="GO" id="GO:0046872">
    <property type="term" value="F:metal ion binding"/>
    <property type="evidence" value="ECO:0007669"/>
    <property type="project" value="UniProtKB-KW"/>
</dbReference>
<dbReference type="GO" id="GO:0006633">
    <property type="term" value="P:fatty acid biosynthetic process"/>
    <property type="evidence" value="ECO:0007669"/>
    <property type="project" value="UniProtKB-KW"/>
</dbReference>
<dbReference type="GO" id="GO:2001295">
    <property type="term" value="P:malonyl-CoA biosynthetic process"/>
    <property type="evidence" value="ECO:0007669"/>
    <property type="project" value="UniProtKB-UniPathway"/>
</dbReference>
<dbReference type="CDD" id="cd06850">
    <property type="entry name" value="biotinyl_domain"/>
    <property type="match status" value="1"/>
</dbReference>
<dbReference type="FunFam" id="2.40.460.10:FF:000001">
    <property type="entry name" value="Acetyl-CoA carboxylase 1"/>
    <property type="match status" value="1"/>
</dbReference>
<dbReference type="FunFam" id="2.40.50.100:FF:000005">
    <property type="entry name" value="Acetyl-CoA carboxylase 1"/>
    <property type="match status" value="1"/>
</dbReference>
<dbReference type="FunFam" id="3.30.470.20:FF:000005">
    <property type="entry name" value="Acetyl-CoA carboxylase 1"/>
    <property type="match status" value="1"/>
</dbReference>
<dbReference type="FunFam" id="3.90.1770.10:FF:000001">
    <property type="entry name" value="acetyl-CoA carboxylase 1"/>
    <property type="match status" value="1"/>
</dbReference>
<dbReference type="FunFam" id="3.30.1490.20:FF:000003">
    <property type="entry name" value="acetyl-CoA carboxylase isoform X1"/>
    <property type="match status" value="1"/>
</dbReference>
<dbReference type="FunFam" id="3.40.50.20:FF:000005">
    <property type="entry name" value="acetyl-CoA carboxylase isoform X2"/>
    <property type="match status" value="1"/>
</dbReference>
<dbReference type="FunFam" id="3.90.226.10:FF:000010">
    <property type="entry name" value="acetyl-CoA carboxylase isoform X2"/>
    <property type="match status" value="1"/>
</dbReference>
<dbReference type="Gene3D" id="2.40.50.100">
    <property type="match status" value="1"/>
</dbReference>
<dbReference type="Gene3D" id="3.40.50.20">
    <property type="match status" value="1"/>
</dbReference>
<dbReference type="Gene3D" id="3.90.226.10">
    <property type="entry name" value="2-enoyl-CoA Hydratase, Chain A, domain 1"/>
    <property type="match status" value="2"/>
</dbReference>
<dbReference type="Gene3D" id="3.30.1490.20">
    <property type="entry name" value="ATP-grasp fold, A domain"/>
    <property type="match status" value="1"/>
</dbReference>
<dbReference type="Gene3D" id="3.30.470.20">
    <property type="entry name" value="ATP-grasp fold, B domain"/>
    <property type="match status" value="1"/>
</dbReference>
<dbReference type="Gene3D" id="2.40.460.10">
    <property type="entry name" value="Biotin dependent carboxylase carboxyltransferase"/>
    <property type="match status" value="1"/>
</dbReference>
<dbReference type="Gene3D" id="3.90.1770.10">
    <property type="entry name" value="PreATP-grasp domain"/>
    <property type="match status" value="1"/>
</dbReference>
<dbReference type="InterPro" id="IPR049076">
    <property type="entry name" value="ACCA"/>
</dbReference>
<dbReference type="InterPro" id="IPR049074">
    <property type="entry name" value="ACCA_BT"/>
</dbReference>
<dbReference type="InterPro" id="IPR034733">
    <property type="entry name" value="AcCoA_carboxyl_beta"/>
</dbReference>
<dbReference type="InterPro" id="IPR013537">
    <property type="entry name" value="AcCoA_COase_cen"/>
</dbReference>
<dbReference type="InterPro" id="IPR011761">
    <property type="entry name" value="ATP-grasp"/>
</dbReference>
<dbReference type="InterPro" id="IPR013815">
    <property type="entry name" value="ATP_grasp_subdomain_1"/>
</dbReference>
<dbReference type="InterPro" id="IPR005481">
    <property type="entry name" value="BC-like_N"/>
</dbReference>
<dbReference type="InterPro" id="IPR001882">
    <property type="entry name" value="Biotin_BS"/>
</dbReference>
<dbReference type="InterPro" id="IPR011764">
    <property type="entry name" value="Biotin_carboxylation_dom"/>
</dbReference>
<dbReference type="InterPro" id="IPR005482">
    <property type="entry name" value="Biotin_COase_C"/>
</dbReference>
<dbReference type="InterPro" id="IPR000089">
    <property type="entry name" value="Biotin_lipoyl"/>
</dbReference>
<dbReference type="InterPro" id="IPR005479">
    <property type="entry name" value="CbamoylP_synth_lsu-like_ATP-bd"/>
</dbReference>
<dbReference type="InterPro" id="IPR029045">
    <property type="entry name" value="ClpP/crotonase-like_dom_sf"/>
</dbReference>
<dbReference type="InterPro" id="IPR011763">
    <property type="entry name" value="COA_CT_C"/>
</dbReference>
<dbReference type="InterPro" id="IPR011762">
    <property type="entry name" value="COA_CT_N"/>
</dbReference>
<dbReference type="InterPro" id="IPR016185">
    <property type="entry name" value="PreATP-grasp_dom_sf"/>
</dbReference>
<dbReference type="InterPro" id="IPR011054">
    <property type="entry name" value="Rudment_hybrid_motif"/>
</dbReference>
<dbReference type="InterPro" id="IPR011053">
    <property type="entry name" value="Single_hybrid_motif"/>
</dbReference>
<dbReference type="PANTHER" id="PTHR45728:SF3">
    <property type="entry name" value="ACETYL-COA CARBOXYLASE"/>
    <property type="match status" value="1"/>
</dbReference>
<dbReference type="PANTHER" id="PTHR45728">
    <property type="entry name" value="ACETYL-COA CARBOXYLASE, ISOFORM A"/>
    <property type="match status" value="1"/>
</dbReference>
<dbReference type="Pfam" id="PF08326">
    <property type="entry name" value="ACC_central"/>
    <property type="match status" value="1"/>
</dbReference>
<dbReference type="Pfam" id="PF21385">
    <property type="entry name" value="ACCA_BT"/>
    <property type="match status" value="1"/>
</dbReference>
<dbReference type="Pfam" id="PF02785">
    <property type="entry name" value="Biotin_carb_C"/>
    <property type="match status" value="1"/>
</dbReference>
<dbReference type="Pfam" id="PF00289">
    <property type="entry name" value="Biotin_carb_N"/>
    <property type="match status" value="1"/>
</dbReference>
<dbReference type="Pfam" id="PF00364">
    <property type="entry name" value="Biotin_lipoyl"/>
    <property type="match status" value="1"/>
</dbReference>
<dbReference type="Pfam" id="PF01039">
    <property type="entry name" value="Carboxyl_trans"/>
    <property type="match status" value="1"/>
</dbReference>
<dbReference type="Pfam" id="PF02786">
    <property type="entry name" value="CPSase_L_D2"/>
    <property type="match status" value="1"/>
</dbReference>
<dbReference type="SMART" id="SM00878">
    <property type="entry name" value="Biotin_carb_C"/>
    <property type="match status" value="1"/>
</dbReference>
<dbReference type="SUPFAM" id="SSF52096">
    <property type="entry name" value="ClpP/crotonase"/>
    <property type="match status" value="2"/>
</dbReference>
<dbReference type="SUPFAM" id="SSF56059">
    <property type="entry name" value="Glutathione synthetase ATP-binding domain-like"/>
    <property type="match status" value="1"/>
</dbReference>
<dbReference type="SUPFAM" id="SSF52440">
    <property type="entry name" value="PreATP-grasp domain"/>
    <property type="match status" value="1"/>
</dbReference>
<dbReference type="SUPFAM" id="SSF51246">
    <property type="entry name" value="Rudiment single hybrid motif"/>
    <property type="match status" value="1"/>
</dbReference>
<dbReference type="SUPFAM" id="SSF51230">
    <property type="entry name" value="Single hybrid motif"/>
    <property type="match status" value="1"/>
</dbReference>
<dbReference type="PROSITE" id="PS50975">
    <property type="entry name" value="ATP_GRASP"/>
    <property type="match status" value="1"/>
</dbReference>
<dbReference type="PROSITE" id="PS50979">
    <property type="entry name" value="BC"/>
    <property type="match status" value="1"/>
</dbReference>
<dbReference type="PROSITE" id="PS00188">
    <property type="entry name" value="BIOTIN"/>
    <property type="match status" value="1"/>
</dbReference>
<dbReference type="PROSITE" id="PS50968">
    <property type="entry name" value="BIOTINYL_LIPOYL"/>
    <property type="match status" value="1"/>
</dbReference>
<dbReference type="PROSITE" id="PS50989">
    <property type="entry name" value="COA_CT_CTER"/>
    <property type="match status" value="1"/>
</dbReference>
<dbReference type="PROSITE" id="PS50980">
    <property type="entry name" value="COA_CT_NTER"/>
    <property type="match status" value="1"/>
</dbReference>
<dbReference type="PROSITE" id="PS00866">
    <property type="entry name" value="CPSASE_1"/>
    <property type="match status" value="1"/>
</dbReference>
<dbReference type="PROSITE" id="PS00867">
    <property type="entry name" value="CPSASE_2"/>
    <property type="match status" value="1"/>
</dbReference>
<organism>
    <name type="scientific">Cryptosporiopsis sp. (strain 8999)</name>
    <dbReference type="NCBI Taxonomy" id="2572248"/>
    <lineage>
        <taxon>Eukaryota</taxon>
        <taxon>Fungi</taxon>
        <taxon>Dikarya</taxon>
        <taxon>Ascomycota</taxon>
        <taxon>Pezizomycotina</taxon>
        <taxon>Leotiomycetes</taxon>
        <taxon>Helotiales</taxon>
        <taxon>Dermateaceae</taxon>
        <taxon>Cryptosporiopsis</taxon>
    </lineage>
</organism>
<feature type="chain" id="PRO_0000453499" description="Acetyl-CoA carboxylase dmxL1">
    <location>
        <begin position="1"/>
        <end position="2299"/>
    </location>
</feature>
<feature type="domain" description="Biotin carboxylation" evidence="5">
    <location>
        <begin position="75"/>
        <end position="583"/>
    </location>
</feature>
<feature type="domain" description="ATP-grasp 1" evidence="4 5">
    <location>
        <begin position="227"/>
        <end position="424"/>
    </location>
</feature>
<feature type="domain" description="Biotinyl-binding" evidence="6">
    <location>
        <begin position="710"/>
        <end position="784"/>
    </location>
</feature>
<feature type="domain" description="CoA carboxyltransferase N-terminal" evidence="7">
    <location>
        <begin position="1539"/>
        <end position="1887"/>
    </location>
</feature>
<feature type="domain" description="CoA carboxyltransferase C-terminal" evidence="8">
    <location>
        <begin position="1891"/>
        <end position="2205"/>
    </location>
</feature>
<feature type="region of interest" description="Disordered" evidence="9">
    <location>
        <begin position="21"/>
        <end position="41"/>
    </location>
</feature>
<feature type="region of interest" description="Disordered" evidence="9">
    <location>
        <begin position="1159"/>
        <end position="1208"/>
    </location>
</feature>
<feature type="compositionally biased region" description="Low complexity" evidence="9">
    <location>
        <begin position="21"/>
        <end position="39"/>
    </location>
</feature>
<feature type="binding site" evidence="4">
    <location>
        <begin position="258"/>
        <end position="315"/>
    </location>
    <ligand>
        <name>ATP</name>
        <dbReference type="ChEBI" id="CHEBI:30616"/>
    </ligand>
</feature>
<feature type="binding site" evidence="4 5">
    <location>
        <position position="381"/>
    </location>
    <ligand>
        <name>Mg(2+)</name>
        <dbReference type="ChEBI" id="CHEBI:18420"/>
        <label>1</label>
    </ligand>
</feature>
<feature type="binding site" evidence="4 5">
    <location>
        <position position="381"/>
    </location>
    <ligand>
        <name>Mn(2+)</name>
        <dbReference type="ChEBI" id="CHEBI:29035"/>
        <label>1</label>
    </ligand>
</feature>
<feature type="binding site" evidence="4 5">
    <location>
        <position position="395"/>
    </location>
    <ligand>
        <name>Mg(2+)</name>
        <dbReference type="ChEBI" id="CHEBI:18420"/>
        <label>1</label>
    </ligand>
</feature>
<feature type="binding site" evidence="4 5">
    <location>
        <position position="395"/>
    </location>
    <ligand>
        <name>Mg(2+)</name>
        <dbReference type="ChEBI" id="CHEBI:18420"/>
        <label>2</label>
    </ligand>
</feature>
<feature type="binding site" evidence="4 5">
    <location>
        <position position="395"/>
    </location>
    <ligand>
        <name>Mn(2+)</name>
        <dbReference type="ChEBI" id="CHEBI:29035"/>
        <label>1</label>
    </ligand>
</feature>
<feature type="binding site" evidence="4 5">
    <location>
        <position position="395"/>
    </location>
    <ligand>
        <name>Mn(2+)</name>
        <dbReference type="ChEBI" id="CHEBI:29035"/>
        <label>2</label>
    </ligand>
</feature>
<feature type="binding site" evidence="4 5">
    <location>
        <position position="397"/>
    </location>
    <ligand>
        <name>Mg(2+)</name>
        <dbReference type="ChEBI" id="CHEBI:18420"/>
        <label>2</label>
    </ligand>
</feature>
<feature type="binding site" evidence="4 5">
    <location>
        <position position="397"/>
    </location>
    <ligand>
        <name>Mn(2+)</name>
        <dbReference type="ChEBI" id="CHEBI:29035"/>
        <label>2</label>
    </ligand>
</feature>
<feature type="modified residue" description="N6-biotinyllysine" evidence="6">
    <location>
        <position position="751"/>
    </location>
</feature>
<keyword id="KW-0067">ATP-binding</keyword>
<keyword id="KW-0092">Biotin</keyword>
<keyword id="KW-0275">Fatty acid biosynthesis</keyword>
<keyword id="KW-0276">Fatty acid metabolism</keyword>
<keyword id="KW-0436">Ligase</keyword>
<keyword id="KW-0444">Lipid biosynthesis</keyword>
<keyword id="KW-0443">Lipid metabolism</keyword>
<keyword id="KW-0460">Magnesium</keyword>
<keyword id="KW-0464">Manganese</keyword>
<keyword id="KW-0479">Metal-binding</keyword>
<keyword id="KW-0511">Multifunctional enzyme</keyword>
<keyword id="KW-0547">Nucleotide-binding</keyword>
<sequence>MAHVNGYVLSASASASASAPTSIPASVPASAPPSSSAPHAARHKLADHFIGRNRVENALAGPVKDFVKSHDGHTVITNVLIANNGIAAVKEMRSVRKWAYETFGDERAIKFTVMATPEDLAANADYIRMADHYVEVPGGTNNHNYANVELIVDIAERIDVHAVWAGWGHASENPRLPESLAASPKKIVFIGPPGSAMRSLGDKISSTIVAQHAKVPCIPWSGSGVDQVAIDADGIVTVDDEVYQKGCVQSWEEGLQKAKEIGFPVMIKASEGGGGKGIRKCEQEEGFEALYNAASSEIPGSPIFIMKLAGNARHLEVQLLADQYGNNISLFGRDCSVQRRHQKIIEEAPATVAKPEIFEAMEKAAVRLGRLVGYVSAGTVEYLYSSADNEFYFLELNPRLQVEHPTTEMVTGVNLPAAQLQIAMGLPLYRIHDIRLLYGVDQQAASEIDFDFSQESSFQTQQRPKPKGHTIACRITSEDPEDGFKPSSGIVHDLNFRSSSNVWGYFSVSNTSSIHSFSDSQFGHIFAYGKTRSASRKHMVVALKELSIRGDFRTTVEYLIKLLETPAFDNNVFTTGWLDELITKKLTVKRPDPVLVTICGAVCKAHLASEASFAEYQTSLEKGQVPPIDTLKTVFPIDFIYDSYYYRFTATRSSLDSYYLFINGSKCSVGVRNLSDGGLLVLLDGQSHTIYWKEEIAATRLSIDGKICLLEQENDPTQLRTSSPGKLVKYTIENGAHIKAGEAFAEVEVMKMYMPILAQEDGVVQLTKQPGTMLEPGDVLGILTLDDPARVKQAAQPFLNPLPDLGPPQVVGTKPAQRFRLLYNILTNILDGFDNQFVMASTLKELIDVLRDPELPYSEWSAQFSAFYSRIPQRLMASFTQIINRARASKSEFPAKSLSKALQRFREGDIVLLKSTLAPLIEVTERYDEGLKTHEFYVFSMLLEQYTAVERQFSSRTASDEEVILRLRDENKNNLFKVIQAILSHNKIRAKNNLILAILDEYKPTNLNAGNVAKYFFPAVRKITEIESRQVAKVALKAREVLIQCALPSVEERVVQMKHILQSSVVESRYSETGWEYREPVLEVLKELVDSKYTIFDVLPIFFTHQDVWVSRAALEVYVRRAYRAYSLKKVQYHNKSGDYPHVVSWDFMRGKMGASELDMEMSSQLSTPSTPATPPTPPYENGKQSKGVGSISDMSNLIENPDKEPTRKGVIVPVHDLEEAEEYLMHALQILPGIGERKKSHNGLLPDLANKRQPSILGPDGSDELSTVCNVAISDTENLDDKELLLCIQRIVNLYKNELLARCVRQLTFICGHKDGTYPGYYTFCGPEYDEDQSIRHSEPALAFQLERDRLSNFNIKPVFTTNRNIHIYEAISREMQSDKRYFTRAVIRQGRLQDKIPTTDYLLSEASRVINDTLDALEIIGNNSSDLNHIFLNFLPVFLSQPLEVEKALSGLLERFRSRLWRMRVTGIEIYITYIDLLTSVAHPLRVVITNTSGHVFQVEMYVEHRSEKDGKWVFQSISSTTKIGALHLQPASTPYPTKALEWLQPKRYKAHLMGTQYVYDFPELFRQAIHNSWTKIVCKYPSIGEKQPPADGYINYTEIILDDHDNLVEVVREPGTNTHGLVAWIMTARTVEYPRGRQFMIIANDITFRVGSFGPKENDFFYKCTEYARNLGIPRIYLCANSGARIGIAEELVPYFNVAWNNPENPEAGFKYLYLTPEDKKKFETQGVVTEEVIENRETRYKIIMIADAKDGHGMDCLKGSALIAAVTSRAYEDIFTITLVTCRSVAACHAHPLLGIGSYLVRLGQRAIQIEGHPMILTGAPAINKVLGQEVYTSNLQLGGTQIMYKNGVSHMTVNDDFEGVSKIVEWLAFVPEKKNTLVPIGPMIDPWDRDIVCSPSKQSYDVRCLIEGMETADGFQSGFFDRDSFVESLGGWAKTVVVGRARLGGIPMGIIAVETRTVENITPANPANGNSTEQIAIEAGGVWYPNSAFKTAQAIKDFNHGEQLPLMVLANWRGFSGGQKDMYDEILKYGSYILDAFIKYEQPVFVYIPPFAQVRGGSWVVLDPVLNQEFMEMYADEDARCGILEPEGVVNVRYRQDKQLETMARLDPEYRALRQKLADPSLSKEEMDDTKAKATAREQLLLPIYLQVSLQFADLHDRAGCMTAKHLIRTELKWRDARRFFYWRVRRRVLEEHILKRIATSSKNPRINRGRNLASLAAWTGIPNFSTADREVALWYEENQKLVDEKVENLKTEGVAYDVASLLRVDSKGGLKGVRHVLSMLSAKEREEALQFLN</sequence>
<accession>A0A4P8DJE6</accession>
<comment type="function">
    <text evidence="10 13">Acetyl-CoA carboxylase; part of the gene cluster that mediates the biosynthesis of the dimeric xanthones cryptosporioptides (PubMed:30996871). The pathway begins with the synthesis of atrochrysone thioester by the polyketide synthase dmx-nrPKS (Probable). The atrochrysone carboxyl ACP thioesterase dmxR1 then breaks the thioester bond and releases the atrochrysone carboxylic acid from dmx-nrPKS (Probable). Atrochrysone carboxylic acid is decarboxylated by the decarboxylase dmxR15, and oxidized by the anthrone oxygenase dmxR16 to yield emodin (Probable). Emodin is then reduced to emodin hydroquinone by the oxidoreductase dmxR7 (Probable). A-ring reduction by the short chain dehydrogenase dmxR18, dehydration by the scytalone dehydratase-like protein dmxR17 and probable spontaneous re-oxidation, results in overall deoxygenation to chrysophanol (PubMed:30996871). Baeyer-Villiger oxidation by the Baeyer-Villiger monooxygenase (BVMO) dmxR6 then yields monodictylactone in equilibrium with monodictyphenone (PubMed:30996871). In the case of the cryptosporioptides biosynthesis, monodictylactone is reduced at C-12 to an alcohol (by the short chain dehydrogenases dmxR12 or dmxR8) and hydroxylated at C-5 by dmxR9, yielding the electron-rich aromatic which could eliminate H(2)O to form the ortho-quinonemethide, followed by tautomerisation to paraquinone and complete the formal reduction to produce the 10-methylgroup (Probable). Conjugate addition of C-4a-OH to the resulting paraquinone by the monooxygenase dmxR10 then gives cyclohexadienone, which is then reduced at C-5 by the short chain dehydrogenase dmxR3 to give the dihydroxanthone (Probable). The 6,7-epoxide in the cryptosporioptides could be introduced by the cytochrome P450 monooxygenase dmxL3 (Probable). The highly reducing PKS dmxL2 manufactures butyrate, which is further carboxylated by dmxL1 to form ethylmalonate (PubMed:30996871). It is not yet clear whether the carboxylation occurs while the butyrate is attached to the ACP of dmxL2, but this unusual fungal metabolite could then be esterified to O-5 by the O-acetyltransferase dmxR13 (PubMed:30996871). Finally, dimerization performed by dmxR5 gives the observed dimers cryptosporioptides A, B and C as the final products of the pathway (PubMed:30996871).</text>
</comment>
<comment type="catalytic activity">
    <reaction evidence="2">
        <text>hydrogencarbonate + acetyl-CoA + ATP = malonyl-CoA + ADP + phosphate + H(+)</text>
        <dbReference type="Rhea" id="RHEA:11308"/>
        <dbReference type="ChEBI" id="CHEBI:15378"/>
        <dbReference type="ChEBI" id="CHEBI:17544"/>
        <dbReference type="ChEBI" id="CHEBI:30616"/>
        <dbReference type="ChEBI" id="CHEBI:43474"/>
        <dbReference type="ChEBI" id="CHEBI:57288"/>
        <dbReference type="ChEBI" id="CHEBI:57384"/>
        <dbReference type="ChEBI" id="CHEBI:456216"/>
        <dbReference type="EC" id="6.4.1.2"/>
    </reaction>
</comment>
<comment type="catalytic activity">
    <reaction evidence="3">
        <text>N(6)-biotinyl-L-lysyl-[protein] + hydrogencarbonate + ATP = N(6)-carboxybiotinyl-L-lysyl-[protein] + ADP + phosphate + H(+)</text>
        <dbReference type="Rhea" id="RHEA:13501"/>
        <dbReference type="Rhea" id="RHEA-COMP:10505"/>
        <dbReference type="Rhea" id="RHEA-COMP:10506"/>
        <dbReference type="ChEBI" id="CHEBI:15378"/>
        <dbReference type="ChEBI" id="CHEBI:17544"/>
        <dbReference type="ChEBI" id="CHEBI:30616"/>
        <dbReference type="ChEBI" id="CHEBI:43474"/>
        <dbReference type="ChEBI" id="CHEBI:83144"/>
        <dbReference type="ChEBI" id="CHEBI:83145"/>
        <dbReference type="ChEBI" id="CHEBI:456216"/>
        <dbReference type="EC" id="6.3.4.14"/>
    </reaction>
</comment>
<comment type="cofactor">
    <cofactor evidence="1">
        <name>biotin</name>
        <dbReference type="ChEBI" id="CHEBI:57586"/>
    </cofactor>
</comment>
<comment type="cofactor">
    <cofactor evidence="4 5">
        <name>Mg(2+)</name>
        <dbReference type="ChEBI" id="CHEBI:18420"/>
    </cofactor>
    <cofactor evidence="4 5">
        <name>Mn(2+)</name>
        <dbReference type="ChEBI" id="CHEBI:29035"/>
    </cofactor>
    <text evidence="4 5">Binds 2 magnesium or manganese ions per subunit.</text>
</comment>
<comment type="pathway">
    <text evidence="10">Secondary metabolite biosynthesis.</text>
</comment>
<comment type="pathway">
    <text evidence="12">Lipid metabolism; malonyl-CoA biosynthesis; malonyl-CoA from acetyl-CoA: step 1/1.</text>
</comment>
<comment type="disruption phenotype">
    <text evidence="10">Abolished production of cryptosprioptide B and C, and produces exclusively cryptosporioptide A.</text>
</comment>
<evidence type="ECO:0000250" key="1">
    <source>
        <dbReference type="UniProtKB" id="O00763"/>
    </source>
</evidence>
<evidence type="ECO:0000250" key="2">
    <source>
        <dbReference type="UniProtKB" id="Q00955"/>
    </source>
</evidence>
<evidence type="ECO:0000250" key="3">
    <source>
        <dbReference type="UniProtKB" id="Q5SWU9"/>
    </source>
</evidence>
<evidence type="ECO:0000255" key="4">
    <source>
        <dbReference type="PROSITE-ProRule" id="PRU00409"/>
    </source>
</evidence>
<evidence type="ECO:0000255" key="5">
    <source>
        <dbReference type="PROSITE-ProRule" id="PRU00969"/>
    </source>
</evidence>
<evidence type="ECO:0000255" key="6">
    <source>
        <dbReference type="PROSITE-ProRule" id="PRU01066"/>
    </source>
</evidence>
<evidence type="ECO:0000255" key="7">
    <source>
        <dbReference type="PROSITE-ProRule" id="PRU01136"/>
    </source>
</evidence>
<evidence type="ECO:0000255" key="8">
    <source>
        <dbReference type="PROSITE-ProRule" id="PRU01137"/>
    </source>
</evidence>
<evidence type="ECO:0000256" key="9">
    <source>
        <dbReference type="SAM" id="MobiDB-lite"/>
    </source>
</evidence>
<evidence type="ECO:0000269" key="10">
    <source>
    </source>
</evidence>
<evidence type="ECO:0000303" key="11">
    <source>
    </source>
</evidence>
<evidence type="ECO:0000305" key="12"/>
<evidence type="ECO:0000305" key="13">
    <source>
    </source>
</evidence>
<reference key="1">
    <citation type="journal article" date="2019" name="Chem. Sci.">
        <title>Structure revision of cryptosporioptides and determination of the genetic basis for dimeric xanthone biosynthesis in fungi.</title>
        <authorList>
            <person name="Greco C."/>
            <person name="de Mattos-Shipley K."/>
            <person name="Bailey A.M."/>
            <person name="Mulholland N.P."/>
            <person name="Vincent J.L."/>
            <person name="Willis C.L."/>
            <person name="Cox R.J."/>
            <person name="Simpson T.J."/>
        </authorList>
    </citation>
    <scope>NUCLEOTIDE SEQUENCE [GENOMIC DNA]</scope>
    <scope>FUNCTION</scope>
    <scope>DISRUPTION PHENOTYPE</scope>
    <scope>PATHWAY</scope>
    <source>
        <strain>8999</strain>
    </source>
</reference>
<name>DMXL1_CRYX8</name>